<sequence>MQLSVWTYEGPPHIGAMRIATAMRDVHYVLHAPQGDTYADLLFTMIERRDRRPPVTYTTFQARDLGGDTADLLQSAVRAAYERFQPQAMLVGASCTAELIQDDPGGLAQALKLPIPVIPLELPAYQRKENWGASETFYRIVRALAASSADGSPRREREAGARPVCNLLGPTALGFRHRDDLAEVTRQVVELGIEINVVAPWNATPADLARLPQAGFNIVLYPEIALTAAQWLHRQFGQPFTRTIPIGVGATRDFIAEVAALAGVDASPVLARSESRLPWYSRSVDSTYLTGKRVFIFGDATHAVAAARVATQELGFEVVGLGTYAREFAREIREAAAVYGVEPLITDDYLEVEARVGELRPELVLGTQMERHIAKRLGIPCAVISAPCHVQDFPARYSPQMGFEGANVLFDTWVHPLMMGLEEHLLGMFREDHEFADHAPSHLGAASAAPAPAPLRVVETVTSTELAWASDAERELTKIPFFVRGKARRNTERFARERNVNLITLETLYDAKAHFGR</sequence>
<keyword id="KW-0004">4Fe-4S</keyword>
<keyword id="KW-0067">ATP-binding</keyword>
<keyword id="KW-0077">Bacteriochlorophyll biosynthesis</keyword>
<keyword id="KW-0149">Chlorophyll biosynthesis</keyword>
<keyword id="KW-0408">Iron</keyword>
<keyword id="KW-0411">Iron-sulfur</keyword>
<keyword id="KW-0479">Metal-binding</keyword>
<keyword id="KW-0547">Nucleotide-binding</keyword>
<keyword id="KW-0560">Oxidoreductase</keyword>
<keyword id="KW-0602">Photosynthesis</keyword>
<keyword id="KW-1185">Reference proteome</keyword>
<proteinExistence type="inferred from homology"/>
<protein>
    <recommendedName>
        <fullName evidence="1">Light-independent protochlorophyllide reductase subunit B</fullName>
        <shortName evidence="1">DPOR subunit B</shortName>
        <shortName evidence="1">LI-POR subunit B</shortName>
        <ecNumber evidence="1">1.3.7.7</ecNumber>
    </recommendedName>
</protein>
<feature type="chain" id="PRO_0000324040" description="Light-independent protochlorophyllide reductase subunit B">
    <location>
        <begin position="1"/>
        <end position="517"/>
    </location>
</feature>
<feature type="active site" description="Proton donor" evidence="1">
    <location>
        <position position="285"/>
    </location>
</feature>
<feature type="binding site" evidence="1">
    <location>
        <position position="36"/>
    </location>
    <ligand>
        <name>[4Fe-4S] cluster</name>
        <dbReference type="ChEBI" id="CHEBI:49883"/>
        <note>ligand shared with heterodimeric partner</note>
    </ligand>
</feature>
<feature type="binding site" evidence="1">
    <location>
        <begin position="420"/>
        <end position="421"/>
    </location>
    <ligand>
        <name>substrate</name>
    </ligand>
</feature>
<dbReference type="EC" id="1.3.7.7" evidence="1"/>
<dbReference type="EMBL" id="CP000494">
    <property type="protein sequence ID" value="ABQ38326.1"/>
    <property type="molecule type" value="Genomic_DNA"/>
</dbReference>
<dbReference type="RefSeq" id="WP_012046267.1">
    <property type="nucleotide sequence ID" value="NC_009485.1"/>
</dbReference>
<dbReference type="SMR" id="A5EQ82"/>
<dbReference type="STRING" id="288000.BBta_6416"/>
<dbReference type="KEGG" id="bbt:BBta_6416"/>
<dbReference type="eggNOG" id="COG2710">
    <property type="taxonomic scope" value="Bacteria"/>
</dbReference>
<dbReference type="HOGENOM" id="CLU_025470_0_0_5"/>
<dbReference type="OrthoDB" id="5717231at2"/>
<dbReference type="UniPathway" id="UPA00671"/>
<dbReference type="Proteomes" id="UP000000246">
    <property type="component" value="Chromosome"/>
</dbReference>
<dbReference type="GO" id="GO:0051539">
    <property type="term" value="F:4 iron, 4 sulfur cluster binding"/>
    <property type="evidence" value="ECO:0007669"/>
    <property type="project" value="UniProtKB-UniRule"/>
</dbReference>
<dbReference type="GO" id="GO:0005524">
    <property type="term" value="F:ATP binding"/>
    <property type="evidence" value="ECO:0007669"/>
    <property type="project" value="UniProtKB-UniRule"/>
</dbReference>
<dbReference type="GO" id="GO:0046872">
    <property type="term" value="F:metal ion binding"/>
    <property type="evidence" value="ECO:0007669"/>
    <property type="project" value="UniProtKB-KW"/>
</dbReference>
<dbReference type="GO" id="GO:0016730">
    <property type="term" value="F:oxidoreductase activity, acting on iron-sulfur proteins as donors"/>
    <property type="evidence" value="ECO:0007669"/>
    <property type="project" value="InterPro"/>
</dbReference>
<dbReference type="GO" id="GO:0016636">
    <property type="term" value="F:oxidoreductase activity, acting on the CH-CH group of donors, iron-sulfur protein as acceptor"/>
    <property type="evidence" value="ECO:0007669"/>
    <property type="project" value="UniProtKB-UniRule"/>
</dbReference>
<dbReference type="GO" id="GO:0036070">
    <property type="term" value="P:light-independent bacteriochlorophyll biosynthetic process"/>
    <property type="evidence" value="ECO:0007669"/>
    <property type="project" value="UniProtKB-UniRule"/>
</dbReference>
<dbReference type="GO" id="GO:0019685">
    <property type="term" value="P:photosynthesis, dark reaction"/>
    <property type="evidence" value="ECO:0007669"/>
    <property type="project" value="InterPro"/>
</dbReference>
<dbReference type="Gene3D" id="1.20.89.20">
    <property type="match status" value="1"/>
</dbReference>
<dbReference type="Gene3D" id="3.40.50.1980">
    <property type="entry name" value="Nitrogenase molybdenum iron protein domain"/>
    <property type="match status" value="3"/>
</dbReference>
<dbReference type="Gene3D" id="1.10.8.550">
    <property type="entry name" value="Proto-chlorophyllide reductase 57 kD subunit B"/>
    <property type="match status" value="1"/>
</dbReference>
<dbReference type="HAMAP" id="MF_00353">
    <property type="entry name" value="ChlB_BchB"/>
    <property type="match status" value="1"/>
</dbReference>
<dbReference type="InterPro" id="IPR050152">
    <property type="entry name" value="ChlB/BchB/BchZ"/>
</dbReference>
<dbReference type="InterPro" id="IPR013580">
    <property type="entry name" value="LI-POR_suB-like_C"/>
</dbReference>
<dbReference type="InterPro" id="IPR000510">
    <property type="entry name" value="Nase/OxRdtase_comp1"/>
</dbReference>
<dbReference type="InterPro" id="IPR042298">
    <property type="entry name" value="P-CP_red_C"/>
</dbReference>
<dbReference type="InterPro" id="IPR005969">
    <property type="entry name" value="Protochl_reductB"/>
</dbReference>
<dbReference type="InterPro" id="IPR016209">
    <property type="entry name" value="Protochlorophyllide_Rdtase"/>
</dbReference>
<dbReference type="NCBIfam" id="TIGR01278">
    <property type="entry name" value="DPOR_BchB"/>
    <property type="match status" value="1"/>
</dbReference>
<dbReference type="PANTHER" id="PTHR33712">
    <property type="entry name" value="LIGHT-INDEPENDENT PROTOCHLOROPHYLLIDE REDUCTASE SUBUNIT B"/>
    <property type="match status" value="1"/>
</dbReference>
<dbReference type="PANTHER" id="PTHR33712:SF7">
    <property type="entry name" value="LIGHT-INDEPENDENT PROTOCHLOROPHYLLIDE REDUCTASE SUBUNIT B"/>
    <property type="match status" value="1"/>
</dbReference>
<dbReference type="Pfam" id="PF00148">
    <property type="entry name" value="Oxidored_nitro"/>
    <property type="match status" value="1"/>
</dbReference>
<dbReference type="Pfam" id="PF08369">
    <property type="entry name" value="PCP_red"/>
    <property type="match status" value="1"/>
</dbReference>
<dbReference type="PIRSF" id="PIRSF000163">
    <property type="entry name" value="PCP_ChlB"/>
    <property type="match status" value="1"/>
</dbReference>
<dbReference type="SUPFAM" id="SSF53807">
    <property type="entry name" value="Helical backbone' metal receptor"/>
    <property type="match status" value="1"/>
</dbReference>
<name>BCHB_BRASB</name>
<organism>
    <name type="scientific">Bradyrhizobium sp. (strain BTAi1 / ATCC BAA-1182)</name>
    <dbReference type="NCBI Taxonomy" id="288000"/>
    <lineage>
        <taxon>Bacteria</taxon>
        <taxon>Pseudomonadati</taxon>
        <taxon>Pseudomonadota</taxon>
        <taxon>Alphaproteobacteria</taxon>
        <taxon>Hyphomicrobiales</taxon>
        <taxon>Nitrobacteraceae</taxon>
        <taxon>Bradyrhizobium</taxon>
    </lineage>
</organism>
<comment type="function">
    <text evidence="1">Component of the dark-operative protochlorophyllide reductase (DPOR) that uses Mg-ATP and reduced ferredoxin to reduce ring D of protochlorophyllide (Pchlide) to form chlorophyllide a (Chlide). This reaction is light-independent. The NB-protein (BchN-BchB) is the catalytic component of the complex.</text>
</comment>
<comment type="catalytic activity">
    <reaction evidence="1">
        <text>chlorophyllide a + oxidized 2[4Fe-4S]-[ferredoxin] + 2 ADP + 2 phosphate = protochlorophyllide a + reduced 2[4Fe-4S]-[ferredoxin] + 2 ATP + 2 H2O</text>
        <dbReference type="Rhea" id="RHEA:28202"/>
        <dbReference type="Rhea" id="RHEA-COMP:10002"/>
        <dbReference type="Rhea" id="RHEA-COMP:10004"/>
        <dbReference type="ChEBI" id="CHEBI:15377"/>
        <dbReference type="ChEBI" id="CHEBI:30616"/>
        <dbReference type="ChEBI" id="CHEBI:33722"/>
        <dbReference type="ChEBI" id="CHEBI:33723"/>
        <dbReference type="ChEBI" id="CHEBI:43474"/>
        <dbReference type="ChEBI" id="CHEBI:83348"/>
        <dbReference type="ChEBI" id="CHEBI:83350"/>
        <dbReference type="ChEBI" id="CHEBI:456216"/>
        <dbReference type="EC" id="1.3.7.7"/>
    </reaction>
</comment>
<comment type="cofactor">
    <cofactor evidence="1">
        <name>[4Fe-4S] cluster</name>
        <dbReference type="ChEBI" id="CHEBI:49883"/>
    </cofactor>
    <text evidence="1">Binds 1 [4Fe-4S] cluster per heterodimer. The cluster is bound at the heterodimer interface by residues from both subunits.</text>
</comment>
<comment type="pathway">
    <text evidence="1">Porphyrin-containing compound metabolism; bacteriochlorophyll biosynthesis (light-independent).</text>
</comment>
<comment type="subunit">
    <text evidence="1">Protochlorophyllide reductase is composed of three subunits; BchL, BchN and BchB. Forms a heterotetramer of two BchB and two BchN subunits.</text>
</comment>
<comment type="similarity">
    <text evidence="1">Belongs to the ChlB/BchB/BchZ family.</text>
</comment>
<reference key="1">
    <citation type="journal article" date="2007" name="Science">
        <title>Legumes symbioses: absence of nod genes in photosynthetic bradyrhizobia.</title>
        <authorList>
            <person name="Giraud E."/>
            <person name="Moulin L."/>
            <person name="Vallenet D."/>
            <person name="Barbe V."/>
            <person name="Cytryn E."/>
            <person name="Avarre J.-C."/>
            <person name="Jaubert M."/>
            <person name="Simon D."/>
            <person name="Cartieaux F."/>
            <person name="Prin Y."/>
            <person name="Bena G."/>
            <person name="Hannibal L."/>
            <person name="Fardoux J."/>
            <person name="Kojadinovic M."/>
            <person name="Vuillet L."/>
            <person name="Lajus A."/>
            <person name="Cruveiller S."/>
            <person name="Rouy Z."/>
            <person name="Mangenot S."/>
            <person name="Segurens B."/>
            <person name="Dossat C."/>
            <person name="Franck W.L."/>
            <person name="Chang W.-S."/>
            <person name="Saunders E."/>
            <person name="Bruce D."/>
            <person name="Richardson P."/>
            <person name="Normand P."/>
            <person name="Dreyfus B."/>
            <person name="Pignol D."/>
            <person name="Stacey G."/>
            <person name="Emerich D."/>
            <person name="Vermeglio A."/>
            <person name="Medigue C."/>
            <person name="Sadowsky M."/>
        </authorList>
    </citation>
    <scope>NUCLEOTIDE SEQUENCE [LARGE SCALE GENOMIC DNA]</scope>
    <source>
        <strain>BTAi1 / ATCC BAA-1182</strain>
    </source>
</reference>
<accession>A5EQ82</accession>
<evidence type="ECO:0000255" key="1">
    <source>
        <dbReference type="HAMAP-Rule" id="MF_00353"/>
    </source>
</evidence>
<gene>
    <name evidence="1" type="primary">bchB</name>
    <name type="ordered locus">BBta_6416</name>
</gene>